<sequence>MLQLARFYSLARTKAIHSHGAPFRPEYALKCGLEIHTQLNTKNKLFSQSTNSATSLVDAPNHHTSYYDIALPGTQPVLNLEAILFAMKLSLALGSQVNSISQFDRKHYFYGDQPQGYQLTQHYRPFARGGKINLSKELDDIDESAKEIGILQLQIEQDTGKSHYTETDKDVITLVDLNRSNVPLIELVTKPDFSDIKQVRAFIKKYQNLVRHLHISSGDLETGAMRVDVNLSINEYARVELKNLPNTSSIINAIKYEYQRQVELISVGDTSSLMEPETRGWTGSSTVKLRSKETTIDYRYMPDPELPYINLAQDVISGVRGLMPQLPDDIMRMLMKKPYQLSLKDAKILTYNSNQNDMYNHEALRSYYLDTFREFSKLAGERSNAKLPTNWIIHEFLGDLNKLQIPLARAKEILPPPVFAQFLKLLHEEVISATSGKMLLFHILENFKQSNCQDLSIPDFSKLIEKFELHAINQVDPQELMDLCNDVIAQHTDDTFIRNLVTGKKKSSLKFLIGQGMRRSQGRIKANEFEKKFKEILNIQW</sequence>
<dbReference type="EC" id="6.3.5.-" evidence="1"/>
<dbReference type="EMBL" id="CH408048">
    <property type="protein sequence ID" value="EDV12165.1"/>
    <property type="molecule type" value="Genomic_DNA"/>
</dbReference>
<dbReference type="SMR" id="B3LNL2"/>
<dbReference type="HOGENOM" id="CLU_019240_4_0_1"/>
<dbReference type="OrthoDB" id="15362at4893"/>
<dbReference type="Proteomes" id="UP000008335">
    <property type="component" value="Unassembled WGS sequence"/>
</dbReference>
<dbReference type="GO" id="GO:0030956">
    <property type="term" value="C:glutamyl-tRNA(Gln) amidotransferase complex"/>
    <property type="evidence" value="ECO:0007669"/>
    <property type="project" value="UniProtKB-UniRule"/>
</dbReference>
<dbReference type="GO" id="GO:0005739">
    <property type="term" value="C:mitochondrion"/>
    <property type="evidence" value="ECO:0007669"/>
    <property type="project" value="UniProtKB-SubCell"/>
</dbReference>
<dbReference type="GO" id="GO:0005524">
    <property type="term" value="F:ATP binding"/>
    <property type="evidence" value="ECO:0007669"/>
    <property type="project" value="UniProtKB-KW"/>
</dbReference>
<dbReference type="GO" id="GO:0050567">
    <property type="term" value="F:glutaminyl-tRNA synthase (glutamine-hydrolyzing) activity"/>
    <property type="evidence" value="ECO:0007669"/>
    <property type="project" value="UniProtKB-UniRule"/>
</dbReference>
<dbReference type="GO" id="GO:0070681">
    <property type="term" value="P:glutaminyl-tRNAGln biosynthesis via transamidation"/>
    <property type="evidence" value="ECO:0007669"/>
    <property type="project" value="UniProtKB-UniRule"/>
</dbReference>
<dbReference type="GO" id="GO:0032543">
    <property type="term" value="P:mitochondrial translation"/>
    <property type="evidence" value="ECO:0007669"/>
    <property type="project" value="UniProtKB-UniRule"/>
</dbReference>
<dbReference type="FunFam" id="1.10.10.410:FF:000005">
    <property type="entry name" value="Glutamyl-tRNA(Gln) amidotransferase subunit B, mitochondrial"/>
    <property type="match status" value="1"/>
</dbReference>
<dbReference type="Gene3D" id="1.10.10.410">
    <property type="match status" value="1"/>
</dbReference>
<dbReference type="HAMAP" id="MF_00121">
    <property type="entry name" value="GatB"/>
    <property type="match status" value="1"/>
</dbReference>
<dbReference type="InterPro" id="IPR017959">
    <property type="entry name" value="Asn/Gln-tRNA_amidoTrfase_suB/E"/>
</dbReference>
<dbReference type="InterPro" id="IPR006075">
    <property type="entry name" value="Asn/Gln-tRNA_Trfase_suB/E_cat"/>
</dbReference>
<dbReference type="InterPro" id="IPR018027">
    <property type="entry name" value="Asn/Gln_amidotransferase"/>
</dbReference>
<dbReference type="InterPro" id="IPR003789">
    <property type="entry name" value="Asn/Gln_tRNA_amidoTrase-B-like"/>
</dbReference>
<dbReference type="InterPro" id="IPR004413">
    <property type="entry name" value="GatB"/>
</dbReference>
<dbReference type="InterPro" id="IPR023168">
    <property type="entry name" value="GatB_Yqey_C_2"/>
</dbReference>
<dbReference type="InterPro" id="IPR017958">
    <property type="entry name" value="Gln-tRNA_amidoTrfase_suB_CS"/>
</dbReference>
<dbReference type="InterPro" id="IPR014746">
    <property type="entry name" value="Gln_synth/guanido_kin_cat_dom"/>
</dbReference>
<dbReference type="NCBIfam" id="TIGR00133">
    <property type="entry name" value="gatB"/>
    <property type="match status" value="1"/>
</dbReference>
<dbReference type="NCBIfam" id="NF004012">
    <property type="entry name" value="PRK05477.1-2"/>
    <property type="match status" value="1"/>
</dbReference>
<dbReference type="PANTHER" id="PTHR11659">
    <property type="entry name" value="GLUTAMYL-TRNA GLN AMIDOTRANSFERASE SUBUNIT B MITOCHONDRIAL AND PROKARYOTIC PET112-RELATED"/>
    <property type="match status" value="1"/>
</dbReference>
<dbReference type="PANTHER" id="PTHR11659:SF0">
    <property type="entry name" value="GLUTAMYL-TRNA(GLN) AMIDOTRANSFERASE SUBUNIT B, MITOCHONDRIAL"/>
    <property type="match status" value="1"/>
</dbReference>
<dbReference type="Pfam" id="PF02934">
    <property type="entry name" value="GatB_N"/>
    <property type="match status" value="1"/>
</dbReference>
<dbReference type="Pfam" id="PF02637">
    <property type="entry name" value="GatB_Yqey"/>
    <property type="match status" value="1"/>
</dbReference>
<dbReference type="SMART" id="SM00845">
    <property type="entry name" value="GatB_Yqey"/>
    <property type="match status" value="1"/>
</dbReference>
<dbReference type="SUPFAM" id="SSF89095">
    <property type="entry name" value="GatB/YqeY motif"/>
    <property type="match status" value="1"/>
</dbReference>
<dbReference type="SUPFAM" id="SSF55931">
    <property type="entry name" value="Glutamine synthetase/guanido kinase"/>
    <property type="match status" value="1"/>
</dbReference>
<dbReference type="PROSITE" id="PS01234">
    <property type="entry name" value="GATB"/>
    <property type="match status" value="1"/>
</dbReference>
<keyword id="KW-0067">ATP-binding</keyword>
<keyword id="KW-0436">Ligase</keyword>
<keyword id="KW-0496">Mitochondrion</keyword>
<keyword id="KW-0547">Nucleotide-binding</keyword>
<keyword id="KW-0648">Protein biosynthesis</keyword>
<evidence type="ECO:0000255" key="1">
    <source>
        <dbReference type="HAMAP-Rule" id="MF_03147"/>
    </source>
</evidence>
<gene>
    <name evidence="1" type="primary">PET112</name>
    <name type="ORF">SCRG_03039</name>
</gene>
<name>GATB_YEAS1</name>
<reference key="1">
    <citation type="submission" date="2005-03" db="EMBL/GenBank/DDBJ databases">
        <title>Annotation of the Saccharomyces cerevisiae RM11-1a genome.</title>
        <authorList>
            <consortium name="The Broad Institute Genome Sequencing Platform"/>
            <person name="Birren B.W."/>
            <person name="Lander E.S."/>
            <person name="Galagan J.E."/>
            <person name="Nusbaum C."/>
            <person name="Devon K."/>
            <person name="Cuomo C."/>
            <person name="Jaffe D.B."/>
            <person name="Butler J."/>
            <person name="Alvarez P."/>
            <person name="Gnerre S."/>
            <person name="Grabherr M."/>
            <person name="Kleber M."/>
            <person name="Mauceli E.W."/>
            <person name="Brockman W."/>
            <person name="MacCallum I.A."/>
            <person name="Rounsley S."/>
            <person name="Young S.K."/>
            <person name="LaButti K."/>
            <person name="Pushparaj V."/>
            <person name="DeCaprio D."/>
            <person name="Crawford M."/>
            <person name="Koehrsen M."/>
            <person name="Engels R."/>
            <person name="Montgomery P."/>
            <person name="Pearson M."/>
            <person name="Howarth C."/>
            <person name="Larson L."/>
            <person name="Luoma S."/>
            <person name="White J."/>
            <person name="O'Leary S."/>
            <person name="Kodira C.D."/>
            <person name="Zeng Q."/>
            <person name="Yandava C."/>
            <person name="Alvarado L."/>
            <person name="Pratt S."/>
            <person name="Kruglyak L."/>
        </authorList>
    </citation>
    <scope>NUCLEOTIDE SEQUENCE [LARGE SCALE GENOMIC DNA]</scope>
    <source>
        <strain>RM11-1a</strain>
    </source>
</reference>
<comment type="function">
    <text evidence="1">Allows the formation of correctly charged Gln-tRNA(Gln) through the transamidation of misacylated Glu-tRNA(Gln) in the mitochondria. The reaction takes place in the presence of glutamine and ATP through an activated gamma-phospho-Glu-tRNA(Gln).</text>
</comment>
<comment type="catalytic activity">
    <reaction evidence="1">
        <text>L-glutamyl-tRNA(Gln) + L-glutamine + ATP + H2O = L-glutaminyl-tRNA(Gln) + L-glutamate + ADP + phosphate + H(+)</text>
        <dbReference type="Rhea" id="RHEA:17521"/>
        <dbReference type="Rhea" id="RHEA-COMP:9681"/>
        <dbReference type="Rhea" id="RHEA-COMP:9684"/>
        <dbReference type="ChEBI" id="CHEBI:15377"/>
        <dbReference type="ChEBI" id="CHEBI:15378"/>
        <dbReference type="ChEBI" id="CHEBI:29985"/>
        <dbReference type="ChEBI" id="CHEBI:30616"/>
        <dbReference type="ChEBI" id="CHEBI:43474"/>
        <dbReference type="ChEBI" id="CHEBI:58359"/>
        <dbReference type="ChEBI" id="CHEBI:78520"/>
        <dbReference type="ChEBI" id="CHEBI:78521"/>
        <dbReference type="ChEBI" id="CHEBI:456216"/>
    </reaction>
</comment>
<comment type="subunit">
    <text evidence="1">Subunit of the heterotrimeric GatFAB amidotransferase (AdT) complex, composed of A, B and F subunits.</text>
</comment>
<comment type="subcellular location">
    <subcellularLocation>
        <location evidence="1">Mitochondrion</location>
    </subcellularLocation>
</comment>
<comment type="miscellaneous">
    <text evidence="1">This protein may be expected to contain an N-terminal transit peptide but none has been predicted.</text>
</comment>
<comment type="similarity">
    <text evidence="1">Belongs to the GatB/GatE family. GatB subfamily.</text>
</comment>
<organism>
    <name type="scientific">Saccharomyces cerevisiae (strain RM11-1a)</name>
    <name type="common">Baker's yeast</name>
    <dbReference type="NCBI Taxonomy" id="285006"/>
    <lineage>
        <taxon>Eukaryota</taxon>
        <taxon>Fungi</taxon>
        <taxon>Dikarya</taxon>
        <taxon>Ascomycota</taxon>
        <taxon>Saccharomycotina</taxon>
        <taxon>Saccharomycetes</taxon>
        <taxon>Saccharomycetales</taxon>
        <taxon>Saccharomycetaceae</taxon>
        <taxon>Saccharomyces</taxon>
    </lineage>
</organism>
<feature type="chain" id="PRO_0000413278" description="Glutamyl-tRNA(Gln) amidotransferase subunit B, mitochondrial">
    <location>
        <begin position="1"/>
        <end position="541"/>
    </location>
</feature>
<proteinExistence type="inferred from homology"/>
<accession>B3LNL2</accession>
<protein>
    <recommendedName>
        <fullName evidence="1">Glutamyl-tRNA(Gln) amidotransferase subunit B, mitochondrial</fullName>
        <shortName evidence="1">Glu-AdT subunit B</shortName>
        <ecNumber evidence="1">6.3.5.-</ecNumber>
    </recommendedName>
</protein>